<accession>F2Z4H3</accession>
<sequence length="150" mass="17143">MAGILFEDIFDVKDIDPEGKKFDRVSRLHCESESFKMDLILDVNIQIYPVDLGDKFRLVIASTLYEDGTLDDGEYNPTDDRPSRADQFEYVMYGKVYRIEGDETSTEAATRLSAYVSYGGLLMRLQGDANNLHGFEVDSRVYLLMKKLAF</sequence>
<evidence type="ECO:0000250" key="1">
    <source>
        <dbReference type="UniProtKB" id="P52434"/>
    </source>
</evidence>
<evidence type="ECO:0000269" key="2">
    <source>
    </source>
</evidence>
<evidence type="ECO:0000269" key="3">
    <source>
    </source>
</evidence>
<evidence type="ECO:0000269" key="4">
    <source>
    </source>
</evidence>
<evidence type="ECO:0000305" key="5"/>
<evidence type="ECO:0007829" key="6">
    <source>
        <dbReference type="PDB" id="5FLM"/>
    </source>
</evidence>
<proteinExistence type="evidence at protein level"/>
<organism>
    <name type="scientific">Bos taurus</name>
    <name type="common">Bovine</name>
    <dbReference type="NCBI Taxonomy" id="9913"/>
    <lineage>
        <taxon>Eukaryota</taxon>
        <taxon>Metazoa</taxon>
        <taxon>Chordata</taxon>
        <taxon>Craniata</taxon>
        <taxon>Vertebrata</taxon>
        <taxon>Euteleostomi</taxon>
        <taxon>Mammalia</taxon>
        <taxon>Eutheria</taxon>
        <taxon>Laurasiatheria</taxon>
        <taxon>Artiodactyla</taxon>
        <taxon>Ruminantia</taxon>
        <taxon>Pecora</taxon>
        <taxon>Bovidae</taxon>
        <taxon>Bovinae</taxon>
        <taxon>Bos</taxon>
    </lineage>
</organism>
<gene>
    <name type="primary">POLR2H</name>
</gene>
<reference key="1">
    <citation type="submission" date="2018-03" db="EMBL/GenBank/DDBJ databases">
        <title>ARS-UCD1.2.</title>
        <authorList>
            <person name="Rosen B.D."/>
            <person name="Bickhart D.M."/>
            <person name="Koren S."/>
            <person name="Schnabel R.D."/>
            <person name="Hall R."/>
            <person name="Zimin A."/>
            <person name="Dreischer C."/>
            <person name="Schultheiss S."/>
            <person name="Schroeder S.G."/>
            <person name="Elsik C.G."/>
            <person name="Couldrey C."/>
            <person name="Liu G.E."/>
            <person name="Van Tassell C.P."/>
            <person name="Phillippy A.M."/>
            <person name="Smith T.P.L."/>
            <person name="Medrano J.F."/>
        </authorList>
    </citation>
    <scope>NUCLEOTIDE SEQUENCE [LARGE SCALE GENOMIC DNA]</scope>
    <source>
        <strain>Hereford</strain>
    </source>
</reference>
<reference key="2">
    <citation type="journal article" date="2006" name="Proc. Natl. Acad. Sci. U.S.A.">
        <title>A Mediator-responsive form of metazoan RNA polymerase II.</title>
        <authorList>
            <person name="Hu X."/>
            <person name="Malik S."/>
            <person name="Negroiu C.C."/>
            <person name="Hubbard K."/>
            <person name="Velalar C.N."/>
            <person name="Hampton B."/>
            <person name="Grosu D."/>
            <person name="Catalano J."/>
            <person name="Roeder R.G."/>
            <person name="Gnatt A."/>
        </authorList>
    </citation>
    <scope>FUNCTION OF POL II</scope>
    <scope>SUBUNIT</scope>
    <scope>IDENTIFICATION IN POL II AND POL II(G) COMPLEXES</scope>
</reference>
<reference key="3">
    <citation type="journal article" date="2016" name="Nature">
        <title>Structure of transcribing mammalian RNA polymerase II.</title>
        <authorList>
            <person name="Bernecky C."/>
            <person name="Herzog F."/>
            <person name="Baumeister W."/>
            <person name="Plitzko J.M."/>
            <person name="Cramer P."/>
        </authorList>
    </citation>
    <scope>STRUCTURE BY ELECTRON MICROSCOPY (3.40 ANGSTROMS)</scope>
    <scope>FUNCTION OF POL II</scope>
    <scope>SUBUNIT</scope>
</reference>
<reference key="4">
    <citation type="journal article" date="2017" name="Nat. Struct. Mol. Biol.">
        <title>Structure of a transcribing RNA polymerase II-DSIF complex reveals a multidentate DNA-RNA clamp.</title>
        <authorList>
            <person name="Bernecky C."/>
            <person name="Plitzko J.M."/>
            <person name="Cramer P."/>
        </authorList>
    </citation>
    <scope>STRUCTURE BY ELECTRON MICROSCOPY (3.70 ANGSTROMS)</scope>
    <scope>SUBUNIT</scope>
</reference>
<keyword id="KW-0002">3D-structure</keyword>
<keyword id="KW-0007">Acetylation</keyword>
<keyword id="KW-0240">DNA-directed RNA polymerase</keyword>
<keyword id="KW-0539">Nucleus</keyword>
<keyword id="KW-1185">Reference proteome</keyword>
<keyword id="KW-0804">Transcription</keyword>
<protein>
    <recommendedName>
        <fullName>DNA-directed RNA polymerases I, II, and III subunit RPABC3</fullName>
    </recommendedName>
</protein>
<feature type="initiator methionine" description="Removed" evidence="1">
    <location>
        <position position="1"/>
    </location>
</feature>
<feature type="chain" id="PRO_0000459628" description="DNA-directed RNA polymerases I, II, and III subunit RPABC3">
    <location>
        <begin position="2"/>
        <end position="150"/>
    </location>
</feature>
<feature type="modified residue" description="N-acetylalanine" evidence="1">
    <location>
        <position position="2"/>
    </location>
</feature>
<feature type="strand" evidence="6">
    <location>
        <begin position="4"/>
        <end position="15"/>
    </location>
</feature>
<feature type="strand" evidence="6">
    <location>
        <begin position="23"/>
        <end position="33"/>
    </location>
</feature>
<feature type="strand" evidence="6">
    <location>
        <begin position="39"/>
        <end position="44"/>
    </location>
</feature>
<feature type="turn" evidence="6">
    <location>
        <begin position="45"/>
        <end position="47"/>
    </location>
</feature>
<feature type="strand" evidence="6">
    <location>
        <begin position="55"/>
        <end position="62"/>
    </location>
</feature>
<feature type="turn" evidence="6">
    <location>
        <begin position="77"/>
        <end position="83"/>
    </location>
</feature>
<feature type="strand" evidence="6">
    <location>
        <begin position="88"/>
        <end position="101"/>
    </location>
</feature>
<feature type="strand" evidence="6">
    <location>
        <begin position="110"/>
        <end position="118"/>
    </location>
</feature>
<feature type="strand" evidence="6">
    <location>
        <begin position="121"/>
        <end position="128"/>
    </location>
</feature>
<feature type="helix" evidence="6">
    <location>
        <begin position="129"/>
        <end position="132"/>
    </location>
</feature>
<feature type="strand" evidence="6">
    <location>
        <begin position="137"/>
        <end position="147"/>
    </location>
</feature>
<comment type="function">
    <text evidence="1 2 3">DNA-dependent RNA polymerase catalyzes the transcription of DNA into RNA using the four ribonucleoside triphosphates as substrates. Common component of RNA polymerases I, II and III which synthesize ribosomal RNA precursors, mRNA precursors and many functional non-coding RNAs, and small RNAs, such as 5S rRNA and tRNAs, respectively.</text>
</comment>
<comment type="subunit">
    <text evidence="1 2 3 4">Component of the RNA polymerase I (Pol I), RNA polymerase II (Pol II) and RNA polymerase III (Pol III) complexes consisting of at least 13, 12 and 17 subunits, respectively (By similarity) (PubMed:26789250, PubMed:28892040). Pol I complex consists of a ten-subunit catalytic core composed of POLR1A/RPA1, POLR1B/RPA2, POLR1C/RPAC1, POLR1D/RPAC2, POLR1H/RPA12, POLR2E/RPABC1, POLR2F/RPABC2, POLR2H/RPABC3, POLR2K/RPABC4 and POLR2L/RPABC5; a mobile stalk subunit POLR1F/RPA43 protruding from the core and additional subunits homologous to general transcription factors POLR1E/RPA49 and POLR1G/RPA34. Part of Pol I pre-initiation complex (PIC), in which Pol I core assembles with RRN3 and promoter-bound UTBF and SL1/TIF-IB complex (By similarity). Pol II complex contains a ten-subunit catalytic core composed of POLR2A/RPB1, POLR2B/RPB2, POLR2C/RPB3, POLR2I/RPB9, POLR2J/RPB11, POLR2E/RPABC1, POLR2F/RPABC2, POLR2H/RPABC3, POLR2K/RPABC4 and POLR2L/RPABC5 and a mobile stalk composed of two subunits POLR2D/RPB4 and POLR2G/RPB7. Part of Pol II(G) complex, in which Pol II core associates with an additional subunit POLR2M; unlike conventional Pol II, Pol II(G) functions as a transcriptional repressor. Part of Pol II pre-initiation complex (PIC), in which Pol II core assembles with Mediator, general transcription factors and other specific initiation factors including GTF2E1, GTF2E2, GTF2F1, GTF2F2, TCEA1, ERCC2, ERCC3, GTF2H2, GTF2H3, GTF2H4, GTF2H5, GTF2A1, GTF2A2, GTF2B and TBP; this large multi-subunit PIC complex mediates DNA unwinding and targets Pol II core to the transcription start site where the first phosphodiester bond forms. Directly interacts with POLR2A (By similarity) (PubMed:16769904, PubMed:26789250, PubMed:28892040). Pol III complex consists of a ten-subunit catalytic core composed of POLR3A/RPC1, POLR3B/RPC2, POLR1C/RPAC1, POLR1D/RPAC2, POLR3K/RPC10, POLR2E/RPABC1, POLR2F/RPABC2, POLR2H/RPABC3, POLR2K/RPABC4 and POLR2L/RPABC5; a mobile stalk composed of two subunits POLR3H/RPC8 and CRCP/RPC9, protruding from the core and functioning primarily in transcription initiation; and additional subunits homologous to general transcription factors of the RNA polymerase II machinery, POLR3C/RPC3-POLR3F/RPC6-POLR3G/RPC7 heterotrimer required for transcription initiation and POLR3D/RPC4-POLR3E/RPC5 heterodimer involved in both transcription initiation and termination (By similarity).</text>
</comment>
<comment type="subcellular location">
    <subcellularLocation>
        <location evidence="1">Nucleus</location>
    </subcellularLocation>
    <subcellularLocation>
        <location evidence="1">Nucleus</location>
        <location evidence="1">Nucleolus</location>
    </subcellularLocation>
</comment>
<comment type="similarity">
    <text evidence="5">Belongs to the eukaryotic RPB8 RNA polymerase subunit family.</text>
</comment>
<name>RPAB3_BOVIN</name>
<dbReference type="RefSeq" id="NP_001178994.1">
    <property type="nucleotide sequence ID" value="NM_001192065.2"/>
</dbReference>
<dbReference type="PDB" id="5FLM">
    <property type="method" value="EM"/>
    <property type="resolution" value="3.40 A"/>
    <property type="chains" value="H=1-150"/>
</dbReference>
<dbReference type="PDB" id="5OIK">
    <property type="method" value="EM"/>
    <property type="resolution" value="3.70 A"/>
    <property type="chains" value="H=1-150"/>
</dbReference>
<dbReference type="PDBsum" id="5FLM"/>
<dbReference type="PDBsum" id="5OIK"/>
<dbReference type="EMDB" id="EMD-3817"/>
<dbReference type="SMR" id="F2Z4H3"/>
<dbReference type="DIP" id="DIP-61193N"/>
<dbReference type="FunCoup" id="F2Z4H3">
    <property type="interactions" value="3254"/>
</dbReference>
<dbReference type="IntAct" id="F2Z4H3">
    <property type="interactions" value="3"/>
</dbReference>
<dbReference type="STRING" id="9913.ENSBTAP00000000606"/>
<dbReference type="PaxDb" id="9913-ENSBTAP00000000606"/>
<dbReference type="Ensembl" id="ENSBTAT00000000606.5">
    <property type="protein sequence ID" value="ENSBTAP00000000606.3"/>
    <property type="gene ID" value="ENSBTAG00000040199.4"/>
</dbReference>
<dbReference type="GeneID" id="505599"/>
<dbReference type="KEGG" id="bta:505599"/>
<dbReference type="CTD" id="5437"/>
<dbReference type="VEuPathDB" id="HostDB:ENSBTAG00000040199"/>
<dbReference type="VGNC" id="VGNC:33142">
    <property type="gene designation" value="POLR2H"/>
</dbReference>
<dbReference type="eggNOG" id="KOG3400">
    <property type="taxonomic scope" value="Eukaryota"/>
</dbReference>
<dbReference type="GeneTree" id="ENSGT00390000018195"/>
<dbReference type="HOGENOM" id="CLU_103864_1_1_1"/>
<dbReference type="InParanoid" id="F2Z4H3"/>
<dbReference type="OMA" id="KEDDKGW"/>
<dbReference type="OrthoDB" id="10249565at2759"/>
<dbReference type="TreeFam" id="TF103043"/>
<dbReference type="Reactome" id="R-BTA-112382">
    <property type="pathway name" value="Formation of RNA Pol II elongation complex"/>
</dbReference>
<dbReference type="Reactome" id="R-BTA-113418">
    <property type="pathway name" value="Formation of the Early Elongation Complex"/>
</dbReference>
<dbReference type="Reactome" id="R-BTA-5250924">
    <property type="pathway name" value="B-WICH complex positively regulates rRNA expression"/>
</dbReference>
<dbReference type="Reactome" id="R-BTA-5578749">
    <property type="pathway name" value="Transcriptional regulation by small RNAs"/>
</dbReference>
<dbReference type="Reactome" id="R-BTA-674695">
    <property type="pathway name" value="RNA Polymerase II Pre-transcription Events"/>
</dbReference>
<dbReference type="Reactome" id="R-BTA-6781823">
    <property type="pathway name" value="Formation of TC-NER Pre-Incision Complex"/>
</dbReference>
<dbReference type="Reactome" id="R-BTA-6782135">
    <property type="pathway name" value="Dual incision in TC-NER"/>
</dbReference>
<dbReference type="Reactome" id="R-BTA-6782210">
    <property type="pathway name" value="Gap-filling DNA repair synthesis and ligation in TC-NER"/>
</dbReference>
<dbReference type="Reactome" id="R-BTA-6796648">
    <property type="pathway name" value="TP53 Regulates Transcription of DNA Repair Genes"/>
</dbReference>
<dbReference type="Reactome" id="R-BTA-6803529">
    <property type="pathway name" value="FGFR2 alternative splicing"/>
</dbReference>
<dbReference type="Reactome" id="R-BTA-6807505">
    <property type="pathway name" value="RNA polymerase II transcribes snRNA genes"/>
</dbReference>
<dbReference type="Reactome" id="R-BTA-72086">
    <property type="pathway name" value="mRNA Capping"/>
</dbReference>
<dbReference type="Reactome" id="R-BTA-72163">
    <property type="pathway name" value="mRNA Splicing - Major Pathway"/>
</dbReference>
<dbReference type="Reactome" id="R-BTA-72165">
    <property type="pathway name" value="mRNA Splicing - Minor Pathway"/>
</dbReference>
<dbReference type="Reactome" id="R-BTA-72203">
    <property type="pathway name" value="Processing of Capped Intron-Containing Pre-mRNA"/>
</dbReference>
<dbReference type="Reactome" id="R-BTA-73762">
    <property type="pathway name" value="RNA Polymerase I Transcription Initiation"/>
</dbReference>
<dbReference type="Reactome" id="R-BTA-73772">
    <property type="pathway name" value="RNA Polymerase I Promoter Escape"/>
</dbReference>
<dbReference type="Reactome" id="R-BTA-73776">
    <property type="pathway name" value="RNA Polymerase II Promoter Escape"/>
</dbReference>
<dbReference type="Reactome" id="R-BTA-73779">
    <property type="pathway name" value="RNA Polymerase II Transcription Pre-Initiation And Promoter Opening"/>
</dbReference>
<dbReference type="Reactome" id="R-BTA-73863">
    <property type="pathway name" value="RNA Polymerase I Transcription Termination"/>
</dbReference>
<dbReference type="Reactome" id="R-BTA-75953">
    <property type="pathway name" value="RNA Polymerase II Transcription Initiation"/>
</dbReference>
<dbReference type="Reactome" id="R-BTA-75955">
    <property type="pathway name" value="RNA Polymerase II Transcription Elongation"/>
</dbReference>
<dbReference type="Reactome" id="R-BTA-76042">
    <property type="pathway name" value="RNA Polymerase II Transcription Initiation And Promoter Clearance"/>
</dbReference>
<dbReference type="Reactome" id="R-BTA-76061">
    <property type="pathway name" value="RNA Polymerase III Transcription Initiation From Type 1 Promoter"/>
</dbReference>
<dbReference type="Reactome" id="R-BTA-76066">
    <property type="pathway name" value="RNA Polymerase III Transcription Initiation From Type 2 Promoter"/>
</dbReference>
<dbReference type="Reactome" id="R-BTA-76071">
    <property type="pathway name" value="RNA Polymerase III Transcription Initiation From Type 3 Promoter"/>
</dbReference>
<dbReference type="Reactome" id="R-BTA-77075">
    <property type="pathway name" value="RNA Pol II CTD phosphorylation and interaction with CE"/>
</dbReference>
<dbReference type="Reactome" id="R-BTA-9018519">
    <property type="pathway name" value="Estrogen-dependent gene expression"/>
</dbReference>
<dbReference type="EvolutionaryTrace" id="F2Z4H3"/>
<dbReference type="Proteomes" id="UP000009136">
    <property type="component" value="Chromosome 1"/>
</dbReference>
<dbReference type="Bgee" id="ENSBTAG00000040199">
    <property type="expression patterns" value="Expressed in ruminant reticulum and 104 other cell types or tissues"/>
</dbReference>
<dbReference type="GO" id="GO:0032993">
    <property type="term" value="C:protein-DNA complex"/>
    <property type="evidence" value="ECO:0007669"/>
    <property type="project" value="Ensembl"/>
</dbReference>
<dbReference type="GO" id="GO:0005736">
    <property type="term" value="C:RNA polymerase I complex"/>
    <property type="evidence" value="ECO:0000318"/>
    <property type="project" value="GO_Central"/>
</dbReference>
<dbReference type="GO" id="GO:0005665">
    <property type="term" value="C:RNA polymerase II, core complex"/>
    <property type="evidence" value="ECO:0000314"/>
    <property type="project" value="UniProtKB"/>
</dbReference>
<dbReference type="GO" id="GO:0005666">
    <property type="term" value="C:RNA polymerase III complex"/>
    <property type="evidence" value="ECO:0000318"/>
    <property type="project" value="GO_Central"/>
</dbReference>
<dbReference type="GO" id="GO:0003899">
    <property type="term" value="F:DNA-directed RNA polymerase activity"/>
    <property type="evidence" value="ECO:0007669"/>
    <property type="project" value="InterPro"/>
</dbReference>
<dbReference type="GO" id="GO:0003697">
    <property type="term" value="F:single-stranded DNA binding"/>
    <property type="evidence" value="ECO:0007669"/>
    <property type="project" value="Ensembl"/>
</dbReference>
<dbReference type="GO" id="GO:0006366">
    <property type="term" value="P:transcription by RNA polymerase II"/>
    <property type="evidence" value="ECO:0007669"/>
    <property type="project" value="Ensembl"/>
</dbReference>
<dbReference type="FunFam" id="2.40.50.140:FF:000073">
    <property type="entry name" value="DNA-directed RNA polymerases I, II, and III subunit RPABC3"/>
    <property type="match status" value="1"/>
</dbReference>
<dbReference type="Gene3D" id="2.40.50.140">
    <property type="entry name" value="Nucleic acid-binding proteins"/>
    <property type="match status" value="1"/>
</dbReference>
<dbReference type="InterPro" id="IPR012340">
    <property type="entry name" value="NA-bd_OB-fold"/>
</dbReference>
<dbReference type="InterPro" id="IPR005570">
    <property type="entry name" value="RPABC3"/>
</dbReference>
<dbReference type="PANTHER" id="PTHR10917">
    <property type="entry name" value="DNA-DIRECTED RNA POLYMERASES I, II, AND III SUBUNIT RPABC3"/>
    <property type="match status" value="1"/>
</dbReference>
<dbReference type="PANTHER" id="PTHR10917:SF0">
    <property type="entry name" value="DNA-DIRECTED RNA POLYMERASES I, II, AND III SUBUNIT RPABC3"/>
    <property type="match status" value="1"/>
</dbReference>
<dbReference type="Pfam" id="PF03870">
    <property type="entry name" value="RNA_pol_Rpb8"/>
    <property type="match status" value="1"/>
</dbReference>
<dbReference type="PIRSF" id="PIRSF000779">
    <property type="entry name" value="RNA_pol_Rpb8"/>
    <property type="match status" value="1"/>
</dbReference>
<dbReference type="SMART" id="SM00658">
    <property type="entry name" value="RPOL8c"/>
    <property type="match status" value="1"/>
</dbReference>
<dbReference type="SUPFAM" id="SSF50249">
    <property type="entry name" value="Nucleic acid-binding proteins"/>
    <property type="match status" value="1"/>
</dbReference>